<feature type="chain" id="PRO_0000178503" description="Large ribosomal subunit protein bL28">
    <location>
        <begin position="1"/>
        <end position="64"/>
    </location>
</feature>
<protein>
    <recommendedName>
        <fullName evidence="1">Large ribosomal subunit protein bL28</fullName>
    </recommendedName>
    <alternativeName>
        <fullName evidence="2">50S ribosomal protein L28</fullName>
    </alternativeName>
</protein>
<accession>Q7NAV5</accession>
<gene>
    <name evidence="1" type="primary">rpmB</name>
    <name type="ordered locus">MYCGA5300</name>
    <name type="ORF">MGA_0253</name>
</gene>
<reference key="1">
    <citation type="journal article" date="2003" name="Microbiology">
        <title>The complete genome sequence of the avian pathogen Mycoplasma gallisepticum strain R(low).</title>
        <authorList>
            <person name="Papazisi L."/>
            <person name="Gorton T.S."/>
            <person name="Kutish G."/>
            <person name="Markham P.F."/>
            <person name="Browning G.F."/>
            <person name="Nguyen D.K."/>
            <person name="Swartzell S."/>
            <person name="Madan A."/>
            <person name="Mahairas G."/>
            <person name="Geary S.J."/>
        </authorList>
    </citation>
    <scope>NUCLEOTIDE SEQUENCE [LARGE SCALE GENOMIC DNA]</scope>
    <source>
        <strain>R(low / passage 15 / clone 2)</strain>
    </source>
</reference>
<sequence>MARRDDLTGLGPLAGNNRSHALNITKRRWNLNLQKVKVKTDRGTLTVKVSARTIRTLRKLDLLA</sequence>
<organism>
    <name type="scientific">Mycoplasmoides gallisepticum (strain R(low / passage 15 / clone 2))</name>
    <name type="common">Mycoplasma gallisepticum</name>
    <dbReference type="NCBI Taxonomy" id="710127"/>
    <lineage>
        <taxon>Bacteria</taxon>
        <taxon>Bacillati</taxon>
        <taxon>Mycoplasmatota</taxon>
        <taxon>Mycoplasmoidales</taxon>
        <taxon>Mycoplasmoidaceae</taxon>
        <taxon>Mycoplasmoides</taxon>
    </lineage>
</organism>
<dbReference type="EMBL" id="AE015450">
    <property type="protein sequence ID" value="AAP56880.2"/>
    <property type="molecule type" value="Genomic_DNA"/>
</dbReference>
<dbReference type="RefSeq" id="WP_011113782.1">
    <property type="nucleotide sequence ID" value="NC_004829.2"/>
</dbReference>
<dbReference type="SMR" id="Q7NAV5"/>
<dbReference type="GeneID" id="93510363"/>
<dbReference type="KEGG" id="mga:MGA_0253"/>
<dbReference type="HOGENOM" id="CLU_064548_7_2_14"/>
<dbReference type="OrthoDB" id="9805609at2"/>
<dbReference type="Proteomes" id="UP000001418">
    <property type="component" value="Chromosome"/>
</dbReference>
<dbReference type="GO" id="GO:1990904">
    <property type="term" value="C:ribonucleoprotein complex"/>
    <property type="evidence" value="ECO:0007669"/>
    <property type="project" value="UniProtKB-KW"/>
</dbReference>
<dbReference type="GO" id="GO:0005840">
    <property type="term" value="C:ribosome"/>
    <property type="evidence" value="ECO:0007669"/>
    <property type="project" value="UniProtKB-KW"/>
</dbReference>
<dbReference type="GO" id="GO:0003735">
    <property type="term" value="F:structural constituent of ribosome"/>
    <property type="evidence" value="ECO:0007669"/>
    <property type="project" value="InterPro"/>
</dbReference>
<dbReference type="GO" id="GO:0006412">
    <property type="term" value="P:translation"/>
    <property type="evidence" value="ECO:0007669"/>
    <property type="project" value="UniProtKB-UniRule"/>
</dbReference>
<dbReference type="Gene3D" id="2.30.170.40">
    <property type="entry name" value="Ribosomal protein L28/L24"/>
    <property type="match status" value="1"/>
</dbReference>
<dbReference type="HAMAP" id="MF_00373">
    <property type="entry name" value="Ribosomal_bL28"/>
    <property type="match status" value="1"/>
</dbReference>
<dbReference type="InterPro" id="IPR050096">
    <property type="entry name" value="Bacterial_rp_bL28"/>
</dbReference>
<dbReference type="InterPro" id="IPR026569">
    <property type="entry name" value="Ribosomal_bL28"/>
</dbReference>
<dbReference type="InterPro" id="IPR034704">
    <property type="entry name" value="Ribosomal_bL28/bL31-like_sf"/>
</dbReference>
<dbReference type="InterPro" id="IPR001383">
    <property type="entry name" value="Ribosomal_bL28_bact-type"/>
</dbReference>
<dbReference type="InterPro" id="IPR037147">
    <property type="entry name" value="Ribosomal_bL28_sf"/>
</dbReference>
<dbReference type="NCBIfam" id="TIGR00009">
    <property type="entry name" value="L28"/>
    <property type="match status" value="1"/>
</dbReference>
<dbReference type="PANTHER" id="PTHR39080">
    <property type="entry name" value="50S RIBOSOMAL PROTEIN L28"/>
    <property type="match status" value="1"/>
</dbReference>
<dbReference type="PANTHER" id="PTHR39080:SF1">
    <property type="entry name" value="LARGE RIBOSOMAL SUBUNIT PROTEIN BL28A"/>
    <property type="match status" value="1"/>
</dbReference>
<dbReference type="Pfam" id="PF00830">
    <property type="entry name" value="Ribosomal_L28"/>
    <property type="match status" value="1"/>
</dbReference>
<dbReference type="SUPFAM" id="SSF143800">
    <property type="entry name" value="L28p-like"/>
    <property type="match status" value="1"/>
</dbReference>
<evidence type="ECO:0000255" key="1">
    <source>
        <dbReference type="HAMAP-Rule" id="MF_00373"/>
    </source>
</evidence>
<evidence type="ECO:0000305" key="2"/>
<keyword id="KW-1185">Reference proteome</keyword>
<keyword id="KW-0687">Ribonucleoprotein</keyword>
<keyword id="KW-0689">Ribosomal protein</keyword>
<comment type="similarity">
    <text evidence="1">Belongs to the bacterial ribosomal protein bL28 family.</text>
</comment>
<name>RL28_MYCGA</name>
<proteinExistence type="inferred from homology"/>